<accession>A5W2C8</accession>
<gene>
    <name evidence="7" type="primary">pcaY</name>
    <name evidence="10" type="ordered locus">Pput_2149</name>
</gene>
<feature type="chain" id="PRO_0000454713" description="Methyl-accepting chemotaxis protein PcaY">
    <location>
        <begin position="1"/>
        <end position="541"/>
    </location>
</feature>
<feature type="topological domain" description="Cytoplasmic" evidence="9">
    <location>
        <begin position="1"/>
        <end position="10"/>
    </location>
</feature>
<feature type="transmembrane region" description="Helical" evidence="2">
    <location>
        <begin position="11"/>
        <end position="31"/>
    </location>
</feature>
<feature type="topological domain" description="Periplasmic" evidence="9">
    <location>
        <begin position="32"/>
        <end position="189"/>
    </location>
</feature>
<feature type="transmembrane region" description="Helical" evidence="2">
    <location>
        <begin position="190"/>
        <end position="210"/>
    </location>
</feature>
<feature type="topological domain" description="Cytoplasmic" evidence="9">
    <location>
        <begin position="211"/>
        <end position="541"/>
    </location>
</feature>
<feature type="domain" description="HAMP" evidence="3">
    <location>
        <begin position="212"/>
        <end position="264"/>
    </location>
</feature>
<feature type="domain" description="Methyl-accepting transducer" evidence="4">
    <location>
        <begin position="269"/>
        <end position="505"/>
    </location>
</feature>
<feature type="region of interest" description="Ligand-binding domain" evidence="1">
    <location>
        <begin position="35"/>
        <end position="187"/>
    </location>
</feature>
<feature type="region of interest" description="Disordered" evidence="5">
    <location>
        <begin position="322"/>
        <end position="341"/>
    </location>
</feature>
<organism>
    <name type="scientific">Pseudomonas putida (strain ATCC 700007 / DSM 6899 / JCM 31910 / BCRC 17059 / LMG 24140 / F1)</name>
    <dbReference type="NCBI Taxonomy" id="351746"/>
    <lineage>
        <taxon>Bacteria</taxon>
        <taxon>Pseudomonadati</taxon>
        <taxon>Pseudomonadota</taxon>
        <taxon>Gammaproteobacteria</taxon>
        <taxon>Pseudomonadales</taxon>
        <taxon>Pseudomonadaceae</taxon>
        <taxon>Pseudomonas</taxon>
    </lineage>
</organism>
<sequence>MLANLKIRTGMFWVLSLFSLTLLFSTASAWWAAVGSDQQITELDQTAHQSDRLNNALLMAIRSSANVSSGFIEQLGGHDESAGKRMALSVELNNKSQTLVDEFVENAREPALRVLATELQATFAEYAKAVAGQREATRQRSLEQYFKVNSDAGNAMGRLQTLRQQLVTTLSERGQQIMLESDRRLARAQLLSLCLLGMTVVLAVLCWAFIAQRVLHPLREAGGHFRRIASGDLSVPVQGQGNNEIGQLFHELQRMQQSQRDTLGQINNCARQLDAAASALNAVTEESANNLRQQGQELEQAATAVTEMTTAVEEVARNAITTSQTTSESNQLAAQSRRQVSENIDGTEAMTREIQTSSAHLQQLVGQVRDIGKVLEVIRSVSEQTNLLALNAAIEAARAGEAGRGFAVVADEVRTLAYRTQQSTQEIEQMIGSVQAGTEAAVASMQASTNRAQSTLDVTLASGQVLEGIYSAIGEINERNLVIASAAEEQAQVAREVDRNLLNIRELSNHSAAGAQQTSEASKALSGLVGEMTALVGRFKV</sequence>
<dbReference type="EMBL" id="CP000712">
    <property type="protein sequence ID" value="ABQ78288.1"/>
    <property type="molecule type" value="Genomic_DNA"/>
</dbReference>
<dbReference type="SMR" id="A5W2C8"/>
<dbReference type="KEGG" id="ppf:Pput_2149"/>
<dbReference type="eggNOG" id="COG0840">
    <property type="taxonomic scope" value="Bacteria"/>
</dbReference>
<dbReference type="HOGENOM" id="CLU_000445_107_27_6"/>
<dbReference type="GO" id="GO:0005886">
    <property type="term" value="C:plasma membrane"/>
    <property type="evidence" value="ECO:0007669"/>
    <property type="project" value="UniProtKB-SubCell"/>
</dbReference>
<dbReference type="GO" id="GO:0004888">
    <property type="term" value="F:transmembrane signaling receptor activity"/>
    <property type="evidence" value="ECO:0007669"/>
    <property type="project" value="InterPro"/>
</dbReference>
<dbReference type="GO" id="GO:0006935">
    <property type="term" value="P:chemotaxis"/>
    <property type="evidence" value="ECO:0007669"/>
    <property type="project" value="UniProtKB-KW"/>
</dbReference>
<dbReference type="GO" id="GO:0007165">
    <property type="term" value="P:signal transduction"/>
    <property type="evidence" value="ECO:0007669"/>
    <property type="project" value="UniProtKB-KW"/>
</dbReference>
<dbReference type="CDD" id="cd06225">
    <property type="entry name" value="HAMP"/>
    <property type="match status" value="1"/>
</dbReference>
<dbReference type="CDD" id="cd11386">
    <property type="entry name" value="MCP_signal"/>
    <property type="match status" value="1"/>
</dbReference>
<dbReference type="FunFam" id="1.10.287.950:FF:000001">
    <property type="entry name" value="Methyl-accepting chemotaxis sensory transducer"/>
    <property type="match status" value="1"/>
</dbReference>
<dbReference type="Gene3D" id="1.10.287.950">
    <property type="entry name" value="Methyl-accepting chemotaxis protein"/>
    <property type="match status" value="1"/>
</dbReference>
<dbReference type="InterPro" id="IPR004090">
    <property type="entry name" value="Chemotax_Me-accpt_rcpt"/>
</dbReference>
<dbReference type="InterPro" id="IPR003660">
    <property type="entry name" value="HAMP_dom"/>
</dbReference>
<dbReference type="InterPro" id="IPR004089">
    <property type="entry name" value="MCPsignal_dom"/>
</dbReference>
<dbReference type="InterPro" id="IPR003122">
    <property type="entry name" value="Tar_rcpt_lig-bd"/>
</dbReference>
<dbReference type="PANTHER" id="PTHR32089">
    <property type="entry name" value="METHYL-ACCEPTING CHEMOTAXIS PROTEIN MCPB"/>
    <property type="match status" value="1"/>
</dbReference>
<dbReference type="PANTHER" id="PTHR32089:SF120">
    <property type="entry name" value="METHYL-ACCEPTING CHEMOTAXIS PROTEIN TLPQ"/>
    <property type="match status" value="1"/>
</dbReference>
<dbReference type="Pfam" id="PF00672">
    <property type="entry name" value="HAMP"/>
    <property type="match status" value="1"/>
</dbReference>
<dbReference type="Pfam" id="PF00015">
    <property type="entry name" value="MCPsignal"/>
    <property type="match status" value="1"/>
</dbReference>
<dbReference type="Pfam" id="PF02203">
    <property type="entry name" value="TarH"/>
    <property type="match status" value="1"/>
</dbReference>
<dbReference type="PRINTS" id="PR00260">
    <property type="entry name" value="CHEMTRNSDUCR"/>
</dbReference>
<dbReference type="SMART" id="SM00304">
    <property type="entry name" value="HAMP"/>
    <property type="match status" value="1"/>
</dbReference>
<dbReference type="SMART" id="SM00283">
    <property type="entry name" value="MA"/>
    <property type="match status" value="1"/>
</dbReference>
<dbReference type="SUPFAM" id="SSF58104">
    <property type="entry name" value="Methyl-accepting chemotaxis protein (MCP) signaling domain"/>
    <property type="match status" value="1"/>
</dbReference>
<dbReference type="PROSITE" id="PS50111">
    <property type="entry name" value="CHEMOTAXIS_TRANSDUC_2"/>
    <property type="match status" value="1"/>
</dbReference>
<dbReference type="PROSITE" id="PS50885">
    <property type="entry name" value="HAMP"/>
    <property type="match status" value="1"/>
</dbReference>
<proteinExistence type="evidence at transcript level"/>
<name>PCAY_PSEP1</name>
<comment type="function">
    <text evidence="6 8">Chemotactic-signal transducers respond to changes in the concentration of attractants and repellents in the environment, transduce a signal from the outside to the inside of the cell, and facilitate sensory adaptation through the variation of the level of methylation (Probable). PcaY is responsible for the detection of multiple aromatic and hydroaromatic compounds that are metabolized through the beta-ketoadipate catabolic pathway, including vanillin, vanillate, 4-hydroxybenzoate (4-HBA), benzoate and protocatechuate. It also senses several nonmetabolizable aromatic compounds (PubMed:25582673).</text>
</comment>
<comment type="subcellular location">
    <subcellularLocation>
        <location evidence="9">Cell inner membrane</location>
        <topology evidence="2">Multi-pass membrane protein</topology>
    </subcellularLocation>
</comment>
<comment type="induction">
    <text evidence="6">Expression is induced by beta-ketoadipate, via the transcriptional activator PcaR.</text>
</comment>
<comment type="disruption phenotype">
    <text evidence="6">Deletion mutant does not respond to vanillate and shows reduced responses to 4-HBA, benzoate, protocatechuate and vanillin.</text>
</comment>
<comment type="miscellaneous">
    <text evidence="9">It could not be ruled out that downstream intermediates are sensed by the chemoreceptor rather than the hydroaromatic compounds themselves.</text>
</comment>
<comment type="similarity">
    <text evidence="8">Belongs to the methyl-accepting chemotaxis (MCP) protein family.</text>
</comment>
<protein>
    <recommendedName>
        <fullName evidence="8">Methyl-accepting chemotaxis protein PcaY</fullName>
    </recommendedName>
    <alternativeName>
        <fullName evidence="7">Aromatic acid chemoreceptor PcaY</fullName>
    </alternativeName>
</protein>
<reference key="1">
    <citation type="submission" date="2007-05" db="EMBL/GenBank/DDBJ databases">
        <title>Complete sequence of Pseudomonas putida F1.</title>
        <authorList>
            <consortium name="US DOE Joint Genome Institute"/>
            <person name="Copeland A."/>
            <person name="Lucas S."/>
            <person name="Lapidus A."/>
            <person name="Barry K."/>
            <person name="Detter J.C."/>
            <person name="Glavina del Rio T."/>
            <person name="Hammon N."/>
            <person name="Israni S."/>
            <person name="Dalin E."/>
            <person name="Tice H."/>
            <person name="Pitluck S."/>
            <person name="Chain P."/>
            <person name="Malfatti S."/>
            <person name="Shin M."/>
            <person name="Vergez L."/>
            <person name="Schmutz J."/>
            <person name="Larimer F."/>
            <person name="Land M."/>
            <person name="Hauser L."/>
            <person name="Kyrpides N."/>
            <person name="Lykidis A."/>
            <person name="Parales R."/>
            <person name="Richardson P."/>
        </authorList>
    </citation>
    <scope>NUCLEOTIDE SEQUENCE [LARGE SCALE GENOMIC DNA]</scope>
    <source>
        <strain>ATCC 700007 / DSM 6899 / JCM 31910 / BCRC 17059 / LMG 24140 / F1</strain>
    </source>
</reference>
<reference key="2">
    <citation type="journal article" date="2015" name="Mol. Microbiol.">
        <title>Integration of chemotaxis, transport and catabolism in Pseudomonas putida and identification of the aromatic acid chemoreceptor PcaY.</title>
        <authorList>
            <person name="Luu R.A."/>
            <person name="Kootstra J.D."/>
            <person name="Nesteryuk V."/>
            <person name="Brunton C.N."/>
            <person name="Parales J.V."/>
            <person name="Ditty J.L."/>
            <person name="Parales R.E."/>
        </authorList>
    </citation>
    <scope>FUNCTION</scope>
    <scope>SUBCELLULAR LOCATION</scope>
    <scope>INDUCTION</scope>
    <scope>DISRUPTION PHENOTYPE</scope>
    <source>
        <strain>ATCC 700007 / DSM 6899 / JCM 31910 / BCRC 17059 / LMG 24140 / F1</strain>
    </source>
</reference>
<keyword id="KW-0997">Cell inner membrane</keyword>
<keyword id="KW-1003">Cell membrane</keyword>
<keyword id="KW-0145">Chemotaxis</keyword>
<keyword id="KW-0472">Membrane</keyword>
<keyword id="KW-0488">Methylation</keyword>
<keyword id="KW-0807">Transducer</keyword>
<keyword id="KW-0812">Transmembrane</keyword>
<keyword id="KW-1133">Transmembrane helix</keyword>
<evidence type="ECO:0000250" key="1">
    <source>
        <dbReference type="UniProtKB" id="Q88JK6"/>
    </source>
</evidence>
<evidence type="ECO:0000255" key="2"/>
<evidence type="ECO:0000255" key="3">
    <source>
        <dbReference type="PROSITE-ProRule" id="PRU00102"/>
    </source>
</evidence>
<evidence type="ECO:0000255" key="4">
    <source>
        <dbReference type="PROSITE-ProRule" id="PRU00284"/>
    </source>
</evidence>
<evidence type="ECO:0000256" key="5">
    <source>
        <dbReference type="SAM" id="MobiDB-lite"/>
    </source>
</evidence>
<evidence type="ECO:0000269" key="6">
    <source>
    </source>
</evidence>
<evidence type="ECO:0000303" key="7">
    <source>
    </source>
</evidence>
<evidence type="ECO:0000305" key="8"/>
<evidence type="ECO:0000305" key="9">
    <source>
    </source>
</evidence>
<evidence type="ECO:0000312" key="10">
    <source>
        <dbReference type="EMBL" id="ABQ78288.1"/>
    </source>
</evidence>